<reference key="1">
    <citation type="journal article" date="2010" name="Genome Biol. Evol.">
        <title>Continuing evolution of Burkholderia mallei through genome reduction and large-scale rearrangements.</title>
        <authorList>
            <person name="Losada L."/>
            <person name="Ronning C.M."/>
            <person name="DeShazer D."/>
            <person name="Woods D."/>
            <person name="Fedorova N."/>
            <person name="Kim H.S."/>
            <person name="Shabalina S.A."/>
            <person name="Pearson T.R."/>
            <person name="Brinkac L."/>
            <person name="Tan P."/>
            <person name="Nandi T."/>
            <person name="Crabtree J."/>
            <person name="Badger J."/>
            <person name="Beckstrom-Sternberg S."/>
            <person name="Saqib M."/>
            <person name="Schutzer S.E."/>
            <person name="Keim P."/>
            <person name="Nierman W.C."/>
        </authorList>
    </citation>
    <scope>NUCLEOTIDE SEQUENCE [LARGE SCALE GENOMIC DNA]</scope>
    <source>
        <strain>SAVP1</strain>
    </source>
</reference>
<sequence>MTEAQTACATTETPVAAPAAPRWRVADVIALYELPFNDLLFRAQQTHREHFDANAIQLSTLLSIKTGGCEEDCGYCSQSAHHDTGLKAEKLMEVDAVLAAARTAKENGATRFCMGAAWRNPKDRHIEPIKEMIRGVKDMGLETCVTLGMLEEHQAKALAEAGLDYYNHNLDTSPEFYGQIISTRTYQDRLDTLERVRDAGINVCCGGIIGMGESRRERAGLIAQLANMNPYPESVPINNLVAIEGTPLENAQALDPFEFVRTIAVARITMPKAMVRLSAGREQLDDAMQALCFLAGANSMFYGDVLLTTGNPRAEADRKLLARLGMSASEASQLSA</sequence>
<keyword id="KW-0001">2Fe-2S</keyword>
<keyword id="KW-0004">4Fe-4S</keyword>
<keyword id="KW-0093">Biotin biosynthesis</keyword>
<keyword id="KW-0408">Iron</keyword>
<keyword id="KW-0411">Iron-sulfur</keyword>
<keyword id="KW-0479">Metal-binding</keyword>
<keyword id="KW-0949">S-adenosyl-L-methionine</keyword>
<keyword id="KW-0808">Transferase</keyword>
<comment type="function">
    <text evidence="1">Catalyzes the conversion of dethiobiotin (DTB) to biotin by the insertion of a sulfur atom into dethiobiotin via a radical-based mechanism.</text>
</comment>
<comment type="catalytic activity">
    <reaction evidence="1">
        <text>(4R,5S)-dethiobiotin + (sulfur carrier)-SH + 2 reduced [2Fe-2S]-[ferredoxin] + 2 S-adenosyl-L-methionine = (sulfur carrier)-H + biotin + 2 5'-deoxyadenosine + 2 L-methionine + 2 oxidized [2Fe-2S]-[ferredoxin]</text>
        <dbReference type="Rhea" id="RHEA:22060"/>
        <dbReference type="Rhea" id="RHEA-COMP:10000"/>
        <dbReference type="Rhea" id="RHEA-COMP:10001"/>
        <dbReference type="Rhea" id="RHEA-COMP:14737"/>
        <dbReference type="Rhea" id="RHEA-COMP:14739"/>
        <dbReference type="ChEBI" id="CHEBI:17319"/>
        <dbReference type="ChEBI" id="CHEBI:29917"/>
        <dbReference type="ChEBI" id="CHEBI:33737"/>
        <dbReference type="ChEBI" id="CHEBI:33738"/>
        <dbReference type="ChEBI" id="CHEBI:57586"/>
        <dbReference type="ChEBI" id="CHEBI:57844"/>
        <dbReference type="ChEBI" id="CHEBI:59789"/>
        <dbReference type="ChEBI" id="CHEBI:64428"/>
        <dbReference type="ChEBI" id="CHEBI:149473"/>
        <dbReference type="EC" id="2.8.1.6"/>
    </reaction>
</comment>
<comment type="cofactor">
    <cofactor evidence="1">
        <name>[4Fe-4S] cluster</name>
        <dbReference type="ChEBI" id="CHEBI:49883"/>
    </cofactor>
    <text evidence="1">Binds 1 [4Fe-4S] cluster. The cluster is coordinated with 3 cysteines and an exchangeable S-adenosyl-L-methionine.</text>
</comment>
<comment type="cofactor">
    <cofactor evidence="1">
        <name>[2Fe-2S] cluster</name>
        <dbReference type="ChEBI" id="CHEBI:190135"/>
    </cofactor>
    <text evidence="1">Binds 1 [2Fe-2S] cluster. The cluster is coordinated with 3 cysteines and 1 arginine.</text>
</comment>
<comment type="pathway">
    <text evidence="1">Cofactor biosynthesis; biotin biosynthesis; biotin from 7,8-diaminononanoate: step 2/2.</text>
</comment>
<comment type="subunit">
    <text evidence="1">Homodimer.</text>
</comment>
<comment type="similarity">
    <text evidence="1">Belongs to the radical SAM superfamily. Biotin synthase family.</text>
</comment>
<dbReference type="EC" id="2.8.1.6" evidence="1"/>
<dbReference type="EMBL" id="CP000526">
    <property type="protein sequence ID" value="ABM52397.1"/>
    <property type="molecule type" value="Genomic_DNA"/>
</dbReference>
<dbReference type="RefSeq" id="WP_004200336.1">
    <property type="nucleotide sequence ID" value="NC_008785.1"/>
</dbReference>
<dbReference type="SMR" id="A1V817"/>
<dbReference type="GeneID" id="93058882"/>
<dbReference type="KEGG" id="bmv:BMASAVP1_A3077"/>
<dbReference type="HOGENOM" id="CLU_033172_1_2_4"/>
<dbReference type="UniPathway" id="UPA00078">
    <property type="reaction ID" value="UER00162"/>
</dbReference>
<dbReference type="GO" id="GO:0051537">
    <property type="term" value="F:2 iron, 2 sulfur cluster binding"/>
    <property type="evidence" value="ECO:0007669"/>
    <property type="project" value="UniProtKB-KW"/>
</dbReference>
<dbReference type="GO" id="GO:0051539">
    <property type="term" value="F:4 iron, 4 sulfur cluster binding"/>
    <property type="evidence" value="ECO:0007669"/>
    <property type="project" value="UniProtKB-KW"/>
</dbReference>
<dbReference type="GO" id="GO:0004076">
    <property type="term" value="F:biotin synthase activity"/>
    <property type="evidence" value="ECO:0007669"/>
    <property type="project" value="UniProtKB-UniRule"/>
</dbReference>
<dbReference type="GO" id="GO:0005506">
    <property type="term" value="F:iron ion binding"/>
    <property type="evidence" value="ECO:0007669"/>
    <property type="project" value="UniProtKB-UniRule"/>
</dbReference>
<dbReference type="GO" id="GO:0009102">
    <property type="term" value="P:biotin biosynthetic process"/>
    <property type="evidence" value="ECO:0007669"/>
    <property type="project" value="UniProtKB-UniRule"/>
</dbReference>
<dbReference type="CDD" id="cd01335">
    <property type="entry name" value="Radical_SAM"/>
    <property type="match status" value="1"/>
</dbReference>
<dbReference type="FunFam" id="3.20.20.70:FF:000011">
    <property type="entry name" value="Biotin synthase"/>
    <property type="match status" value="1"/>
</dbReference>
<dbReference type="Gene3D" id="3.20.20.70">
    <property type="entry name" value="Aldolase class I"/>
    <property type="match status" value="1"/>
</dbReference>
<dbReference type="HAMAP" id="MF_01694">
    <property type="entry name" value="BioB"/>
    <property type="match status" value="1"/>
</dbReference>
<dbReference type="InterPro" id="IPR013785">
    <property type="entry name" value="Aldolase_TIM"/>
</dbReference>
<dbReference type="InterPro" id="IPR010722">
    <property type="entry name" value="BATS_dom"/>
</dbReference>
<dbReference type="InterPro" id="IPR002684">
    <property type="entry name" value="Biotin_synth/BioAB"/>
</dbReference>
<dbReference type="InterPro" id="IPR024177">
    <property type="entry name" value="Biotin_synthase"/>
</dbReference>
<dbReference type="InterPro" id="IPR006638">
    <property type="entry name" value="Elp3/MiaA/NifB-like_rSAM"/>
</dbReference>
<dbReference type="InterPro" id="IPR007197">
    <property type="entry name" value="rSAM"/>
</dbReference>
<dbReference type="NCBIfam" id="TIGR00433">
    <property type="entry name" value="bioB"/>
    <property type="match status" value="1"/>
</dbReference>
<dbReference type="PANTHER" id="PTHR22976">
    <property type="entry name" value="BIOTIN SYNTHASE"/>
    <property type="match status" value="1"/>
</dbReference>
<dbReference type="PANTHER" id="PTHR22976:SF2">
    <property type="entry name" value="BIOTIN SYNTHASE, MITOCHONDRIAL"/>
    <property type="match status" value="1"/>
</dbReference>
<dbReference type="Pfam" id="PF06968">
    <property type="entry name" value="BATS"/>
    <property type="match status" value="1"/>
</dbReference>
<dbReference type="Pfam" id="PF04055">
    <property type="entry name" value="Radical_SAM"/>
    <property type="match status" value="1"/>
</dbReference>
<dbReference type="PIRSF" id="PIRSF001619">
    <property type="entry name" value="Biotin_synth"/>
    <property type="match status" value="1"/>
</dbReference>
<dbReference type="SFLD" id="SFLDF00272">
    <property type="entry name" value="biotin_synthase"/>
    <property type="match status" value="1"/>
</dbReference>
<dbReference type="SFLD" id="SFLDS00029">
    <property type="entry name" value="Radical_SAM"/>
    <property type="match status" value="1"/>
</dbReference>
<dbReference type="SMART" id="SM00876">
    <property type="entry name" value="BATS"/>
    <property type="match status" value="1"/>
</dbReference>
<dbReference type="SMART" id="SM00729">
    <property type="entry name" value="Elp3"/>
    <property type="match status" value="1"/>
</dbReference>
<dbReference type="SUPFAM" id="SSF102114">
    <property type="entry name" value="Radical SAM enzymes"/>
    <property type="match status" value="1"/>
</dbReference>
<dbReference type="PROSITE" id="PS51918">
    <property type="entry name" value="RADICAL_SAM"/>
    <property type="match status" value="1"/>
</dbReference>
<gene>
    <name evidence="1" type="primary">bioB</name>
    <name type="ordered locus">BMASAVP1_A3077</name>
</gene>
<feature type="chain" id="PRO_0000381268" description="Biotin synthase">
    <location>
        <begin position="1"/>
        <end position="336"/>
    </location>
</feature>
<feature type="domain" description="Radical SAM core" evidence="2">
    <location>
        <begin position="54"/>
        <end position="281"/>
    </location>
</feature>
<feature type="binding site" evidence="1">
    <location>
        <position position="69"/>
    </location>
    <ligand>
        <name>[4Fe-4S] cluster</name>
        <dbReference type="ChEBI" id="CHEBI:49883"/>
        <note>4Fe-4S-S-AdoMet</note>
    </ligand>
</feature>
<feature type="binding site" evidence="1">
    <location>
        <position position="73"/>
    </location>
    <ligand>
        <name>[4Fe-4S] cluster</name>
        <dbReference type="ChEBI" id="CHEBI:49883"/>
        <note>4Fe-4S-S-AdoMet</note>
    </ligand>
</feature>
<feature type="binding site" evidence="1">
    <location>
        <position position="76"/>
    </location>
    <ligand>
        <name>[4Fe-4S] cluster</name>
        <dbReference type="ChEBI" id="CHEBI:49883"/>
        <note>4Fe-4S-S-AdoMet</note>
    </ligand>
</feature>
<feature type="binding site" evidence="1">
    <location>
        <position position="113"/>
    </location>
    <ligand>
        <name>[2Fe-2S] cluster</name>
        <dbReference type="ChEBI" id="CHEBI:190135"/>
    </ligand>
</feature>
<feature type="binding site" evidence="1">
    <location>
        <position position="144"/>
    </location>
    <ligand>
        <name>[2Fe-2S] cluster</name>
        <dbReference type="ChEBI" id="CHEBI:190135"/>
    </ligand>
</feature>
<feature type="binding site" evidence="1">
    <location>
        <position position="204"/>
    </location>
    <ligand>
        <name>[2Fe-2S] cluster</name>
        <dbReference type="ChEBI" id="CHEBI:190135"/>
    </ligand>
</feature>
<feature type="binding site" evidence="1">
    <location>
        <position position="276"/>
    </location>
    <ligand>
        <name>[2Fe-2S] cluster</name>
        <dbReference type="ChEBI" id="CHEBI:190135"/>
    </ligand>
</feature>
<evidence type="ECO:0000255" key="1">
    <source>
        <dbReference type="HAMAP-Rule" id="MF_01694"/>
    </source>
</evidence>
<evidence type="ECO:0000255" key="2">
    <source>
        <dbReference type="PROSITE-ProRule" id="PRU01266"/>
    </source>
</evidence>
<protein>
    <recommendedName>
        <fullName evidence="1">Biotin synthase</fullName>
        <ecNumber evidence="1">2.8.1.6</ecNumber>
    </recommendedName>
</protein>
<name>BIOB_BURMS</name>
<organism>
    <name type="scientific">Burkholderia mallei (strain SAVP1)</name>
    <dbReference type="NCBI Taxonomy" id="320388"/>
    <lineage>
        <taxon>Bacteria</taxon>
        <taxon>Pseudomonadati</taxon>
        <taxon>Pseudomonadota</taxon>
        <taxon>Betaproteobacteria</taxon>
        <taxon>Burkholderiales</taxon>
        <taxon>Burkholderiaceae</taxon>
        <taxon>Burkholderia</taxon>
        <taxon>pseudomallei group</taxon>
    </lineage>
</organism>
<accession>A1V817</accession>
<proteinExistence type="inferred from homology"/>